<proteinExistence type="inferred from homology"/>
<reference key="1">
    <citation type="journal article" date="2002" name="Proc. Natl. Acad. Sci. U.S.A.">
        <title>Genome sequence of Streptococcus mutans UA159, a cariogenic dental pathogen.</title>
        <authorList>
            <person name="Ajdic D.J."/>
            <person name="McShan W.M."/>
            <person name="McLaughlin R.E."/>
            <person name="Savic G."/>
            <person name="Chang J."/>
            <person name="Carson M.B."/>
            <person name="Primeaux C."/>
            <person name="Tian R."/>
            <person name="Kenton S."/>
            <person name="Jia H.G."/>
            <person name="Lin S.P."/>
            <person name="Qian Y."/>
            <person name="Li S."/>
            <person name="Zhu H."/>
            <person name="Najar F.Z."/>
            <person name="Lai H."/>
            <person name="White J."/>
            <person name="Roe B.A."/>
            <person name="Ferretti J.J."/>
        </authorList>
    </citation>
    <scope>NUCLEOTIDE SEQUENCE [LARGE SCALE GENOMIC DNA]</scope>
    <source>
        <strain>ATCC 700610 / UA159</strain>
    </source>
</reference>
<protein>
    <recommendedName>
        <fullName evidence="1">Phosphopantetheine adenylyltransferase</fullName>
        <ecNumber evidence="1">2.7.7.3</ecNumber>
    </recommendedName>
    <alternativeName>
        <fullName evidence="1">Dephospho-CoA pyrophosphorylase</fullName>
    </alternativeName>
    <alternativeName>
        <fullName evidence="1">Pantetheine-phosphate adenylyltransferase</fullName>
        <shortName evidence="1">PPAT</shortName>
    </alternativeName>
</protein>
<name>COAD_STRMU</name>
<gene>
    <name evidence="1" type="primary">coaD</name>
    <name type="ordered locus">SMU_517</name>
</gene>
<organism>
    <name type="scientific">Streptococcus mutans serotype c (strain ATCC 700610 / UA159)</name>
    <dbReference type="NCBI Taxonomy" id="210007"/>
    <lineage>
        <taxon>Bacteria</taxon>
        <taxon>Bacillati</taxon>
        <taxon>Bacillota</taxon>
        <taxon>Bacilli</taxon>
        <taxon>Lactobacillales</taxon>
        <taxon>Streptococcaceae</taxon>
        <taxon>Streptococcus</taxon>
    </lineage>
</organism>
<sequence length="166" mass="18777">MSDRIGLFAGSFDPVTNGHVDIIRRASGLFDKLYVGLFYNKDKTGLFEPARRQIMLKEALGDLKNVEVVAARDSLAVDIARQHQVTHLVRGLRNAQDLEYEANLAFFNSQLAKEIETVFLLTALDYRYFSSSRIRELIHFGADISPYVPQGVVKEVGKKCENKQKI</sequence>
<evidence type="ECO:0000255" key="1">
    <source>
        <dbReference type="HAMAP-Rule" id="MF_00151"/>
    </source>
</evidence>
<accession>Q8DVH2</accession>
<comment type="function">
    <text evidence="1">Reversibly transfers an adenylyl group from ATP to 4'-phosphopantetheine, yielding dephospho-CoA (dPCoA) and pyrophosphate.</text>
</comment>
<comment type="catalytic activity">
    <reaction evidence="1">
        <text>(R)-4'-phosphopantetheine + ATP + H(+) = 3'-dephospho-CoA + diphosphate</text>
        <dbReference type="Rhea" id="RHEA:19801"/>
        <dbReference type="ChEBI" id="CHEBI:15378"/>
        <dbReference type="ChEBI" id="CHEBI:30616"/>
        <dbReference type="ChEBI" id="CHEBI:33019"/>
        <dbReference type="ChEBI" id="CHEBI:57328"/>
        <dbReference type="ChEBI" id="CHEBI:61723"/>
        <dbReference type="EC" id="2.7.7.3"/>
    </reaction>
</comment>
<comment type="cofactor">
    <cofactor evidence="1">
        <name>Mg(2+)</name>
        <dbReference type="ChEBI" id="CHEBI:18420"/>
    </cofactor>
</comment>
<comment type="pathway">
    <text evidence="1">Cofactor biosynthesis; coenzyme A biosynthesis; CoA from (R)-pantothenate: step 4/5.</text>
</comment>
<comment type="subunit">
    <text evidence="1">Homohexamer.</text>
</comment>
<comment type="subcellular location">
    <subcellularLocation>
        <location evidence="1">Cytoplasm</location>
    </subcellularLocation>
</comment>
<comment type="similarity">
    <text evidence="1">Belongs to the bacterial CoaD family.</text>
</comment>
<dbReference type="EC" id="2.7.7.3" evidence="1"/>
<dbReference type="EMBL" id="AE014133">
    <property type="protein sequence ID" value="AAN58261.1"/>
    <property type="molecule type" value="Genomic_DNA"/>
</dbReference>
<dbReference type="RefSeq" id="NP_720955.1">
    <property type="nucleotide sequence ID" value="NC_004350.2"/>
</dbReference>
<dbReference type="RefSeq" id="WP_002262038.1">
    <property type="nucleotide sequence ID" value="NC_004350.2"/>
</dbReference>
<dbReference type="SMR" id="Q8DVH2"/>
<dbReference type="STRING" id="210007.SMU_517"/>
<dbReference type="KEGG" id="smu:SMU_517"/>
<dbReference type="PATRIC" id="fig|210007.7.peg.456"/>
<dbReference type="eggNOG" id="COG0669">
    <property type="taxonomic scope" value="Bacteria"/>
</dbReference>
<dbReference type="HOGENOM" id="CLU_100149_0_1_9"/>
<dbReference type="OrthoDB" id="9806661at2"/>
<dbReference type="PhylomeDB" id="Q8DVH2"/>
<dbReference type="BRENDA" id="2.7.7.3">
    <property type="organism ID" value="5941"/>
</dbReference>
<dbReference type="UniPathway" id="UPA00241">
    <property type="reaction ID" value="UER00355"/>
</dbReference>
<dbReference type="Proteomes" id="UP000002512">
    <property type="component" value="Chromosome"/>
</dbReference>
<dbReference type="GO" id="GO:0005737">
    <property type="term" value="C:cytoplasm"/>
    <property type="evidence" value="ECO:0007669"/>
    <property type="project" value="UniProtKB-SubCell"/>
</dbReference>
<dbReference type="GO" id="GO:0005524">
    <property type="term" value="F:ATP binding"/>
    <property type="evidence" value="ECO:0007669"/>
    <property type="project" value="UniProtKB-KW"/>
</dbReference>
<dbReference type="GO" id="GO:0004595">
    <property type="term" value="F:pantetheine-phosphate adenylyltransferase activity"/>
    <property type="evidence" value="ECO:0007669"/>
    <property type="project" value="UniProtKB-UniRule"/>
</dbReference>
<dbReference type="GO" id="GO:0015937">
    <property type="term" value="P:coenzyme A biosynthetic process"/>
    <property type="evidence" value="ECO:0007669"/>
    <property type="project" value="UniProtKB-UniRule"/>
</dbReference>
<dbReference type="CDD" id="cd02163">
    <property type="entry name" value="PPAT"/>
    <property type="match status" value="1"/>
</dbReference>
<dbReference type="Gene3D" id="3.40.50.620">
    <property type="entry name" value="HUPs"/>
    <property type="match status" value="1"/>
</dbReference>
<dbReference type="HAMAP" id="MF_00151">
    <property type="entry name" value="PPAT_bact"/>
    <property type="match status" value="1"/>
</dbReference>
<dbReference type="InterPro" id="IPR004821">
    <property type="entry name" value="Cyt_trans-like"/>
</dbReference>
<dbReference type="InterPro" id="IPR001980">
    <property type="entry name" value="PPAT"/>
</dbReference>
<dbReference type="InterPro" id="IPR014729">
    <property type="entry name" value="Rossmann-like_a/b/a_fold"/>
</dbReference>
<dbReference type="NCBIfam" id="TIGR01510">
    <property type="entry name" value="coaD_prev_kdtB"/>
    <property type="match status" value="1"/>
</dbReference>
<dbReference type="NCBIfam" id="TIGR00125">
    <property type="entry name" value="cyt_tran_rel"/>
    <property type="match status" value="1"/>
</dbReference>
<dbReference type="PANTHER" id="PTHR21342">
    <property type="entry name" value="PHOSPHOPANTETHEINE ADENYLYLTRANSFERASE"/>
    <property type="match status" value="1"/>
</dbReference>
<dbReference type="PANTHER" id="PTHR21342:SF1">
    <property type="entry name" value="PHOSPHOPANTETHEINE ADENYLYLTRANSFERASE"/>
    <property type="match status" value="1"/>
</dbReference>
<dbReference type="Pfam" id="PF01467">
    <property type="entry name" value="CTP_transf_like"/>
    <property type="match status" value="1"/>
</dbReference>
<dbReference type="PRINTS" id="PR01020">
    <property type="entry name" value="LPSBIOSNTHSS"/>
</dbReference>
<dbReference type="SUPFAM" id="SSF52374">
    <property type="entry name" value="Nucleotidylyl transferase"/>
    <property type="match status" value="1"/>
</dbReference>
<feature type="chain" id="PRO_0000156283" description="Phosphopantetheine adenylyltransferase">
    <location>
        <begin position="1"/>
        <end position="166"/>
    </location>
</feature>
<feature type="binding site" evidence="1">
    <location>
        <begin position="11"/>
        <end position="12"/>
    </location>
    <ligand>
        <name>ATP</name>
        <dbReference type="ChEBI" id="CHEBI:30616"/>
    </ligand>
</feature>
<feature type="binding site" evidence="1">
    <location>
        <position position="11"/>
    </location>
    <ligand>
        <name>substrate</name>
    </ligand>
</feature>
<feature type="binding site" evidence="1">
    <location>
        <position position="19"/>
    </location>
    <ligand>
        <name>ATP</name>
        <dbReference type="ChEBI" id="CHEBI:30616"/>
    </ligand>
</feature>
<feature type="binding site" evidence="1">
    <location>
        <position position="43"/>
    </location>
    <ligand>
        <name>substrate</name>
    </ligand>
</feature>
<feature type="binding site" evidence="1">
    <location>
        <position position="76"/>
    </location>
    <ligand>
        <name>substrate</name>
    </ligand>
</feature>
<feature type="binding site" evidence="1">
    <location>
        <position position="90"/>
    </location>
    <ligand>
        <name>substrate</name>
    </ligand>
</feature>
<feature type="binding site" evidence="1">
    <location>
        <begin position="91"/>
        <end position="93"/>
    </location>
    <ligand>
        <name>ATP</name>
        <dbReference type="ChEBI" id="CHEBI:30616"/>
    </ligand>
</feature>
<feature type="binding site" evidence="1">
    <location>
        <position position="101"/>
    </location>
    <ligand>
        <name>ATP</name>
        <dbReference type="ChEBI" id="CHEBI:30616"/>
    </ligand>
</feature>
<feature type="binding site" evidence="1">
    <location>
        <begin position="126"/>
        <end position="132"/>
    </location>
    <ligand>
        <name>ATP</name>
        <dbReference type="ChEBI" id="CHEBI:30616"/>
    </ligand>
</feature>
<feature type="site" description="Transition state stabilizer" evidence="1">
    <location>
        <position position="19"/>
    </location>
</feature>
<keyword id="KW-0067">ATP-binding</keyword>
<keyword id="KW-0173">Coenzyme A biosynthesis</keyword>
<keyword id="KW-0963">Cytoplasm</keyword>
<keyword id="KW-0460">Magnesium</keyword>
<keyword id="KW-0547">Nucleotide-binding</keyword>
<keyword id="KW-0548">Nucleotidyltransferase</keyword>
<keyword id="KW-1185">Reference proteome</keyword>
<keyword id="KW-0808">Transferase</keyword>